<dbReference type="EC" id="4.1.1.11" evidence="1"/>
<dbReference type="EMBL" id="CP000026">
    <property type="protein sequence ID" value="AAV76219.1"/>
    <property type="molecule type" value="Genomic_DNA"/>
</dbReference>
<dbReference type="RefSeq" id="WP_000621526.1">
    <property type="nucleotide sequence ID" value="NC_006511.1"/>
</dbReference>
<dbReference type="SMR" id="Q5PDB9"/>
<dbReference type="GeneID" id="89550440"/>
<dbReference type="KEGG" id="spt:SPA0186"/>
<dbReference type="HOGENOM" id="CLU_115305_2_1_6"/>
<dbReference type="UniPathway" id="UPA00028">
    <property type="reaction ID" value="UER00002"/>
</dbReference>
<dbReference type="Proteomes" id="UP000008185">
    <property type="component" value="Chromosome"/>
</dbReference>
<dbReference type="GO" id="GO:0005829">
    <property type="term" value="C:cytosol"/>
    <property type="evidence" value="ECO:0007669"/>
    <property type="project" value="TreeGrafter"/>
</dbReference>
<dbReference type="GO" id="GO:0004068">
    <property type="term" value="F:aspartate 1-decarboxylase activity"/>
    <property type="evidence" value="ECO:0007669"/>
    <property type="project" value="UniProtKB-UniRule"/>
</dbReference>
<dbReference type="GO" id="GO:0006523">
    <property type="term" value="P:alanine biosynthetic process"/>
    <property type="evidence" value="ECO:0007669"/>
    <property type="project" value="InterPro"/>
</dbReference>
<dbReference type="GO" id="GO:0015940">
    <property type="term" value="P:pantothenate biosynthetic process"/>
    <property type="evidence" value="ECO:0007669"/>
    <property type="project" value="UniProtKB-UniRule"/>
</dbReference>
<dbReference type="CDD" id="cd06919">
    <property type="entry name" value="Asp_decarbox"/>
    <property type="match status" value="1"/>
</dbReference>
<dbReference type="FunFam" id="2.40.40.20:FF:000004">
    <property type="entry name" value="Aspartate 1-decarboxylase"/>
    <property type="match status" value="1"/>
</dbReference>
<dbReference type="Gene3D" id="2.40.40.20">
    <property type="match status" value="1"/>
</dbReference>
<dbReference type="HAMAP" id="MF_00446">
    <property type="entry name" value="PanD"/>
    <property type="match status" value="1"/>
</dbReference>
<dbReference type="InterPro" id="IPR009010">
    <property type="entry name" value="Asp_de-COase-like_dom_sf"/>
</dbReference>
<dbReference type="InterPro" id="IPR003190">
    <property type="entry name" value="Asp_decarbox"/>
</dbReference>
<dbReference type="NCBIfam" id="TIGR00223">
    <property type="entry name" value="panD"/>
    <property type="match status" value="1"/>
</dbReference>
<dbReference type="PANTHER" id="PTHR21012">
    <property type="entry name" value="ASPARTATE 1-DECARBOXYLASE"/>
    <property type="match status" value="1"/>
</dbReference>
<dbReference type="PANTHER" id="PTHR21012:SF0">
    <property type="entry name" value="ASPARTATE 1-DECARBOXYLASE"/>
    <property type="match status" value="1"/>
</dbReference>
<dbReference type="Pfam" id="PF02261">
    <property type="entry name" value="Asp_decarbox"/>
    <property type="match status" value="1"/>
</dbReference>
<dbReference type="PIRSF" id="PIRSF006246">
    <property type="entry name" value="Asp_decarbox"/>
    <property type="match status" value="1"/>
</dbReference>
<dbReference type="SUPFAM" id="SSF50692">
    <property type="entry name" value="ADC-like"/>
    <property type="match status" value="1"/>
</dbReference>
<feature type="chain" id="PRO_0000023149" description="Aspartate 1-decarboxylase beta chain" evidence="1">
    <location>
        <begin position="1"/>
        <end position="24"/>
    </location>
</feature>
<feature type="chain" id="PRO_0000023150" description="Aspartate 1-decarboxylase alpha chain" evidence="1">
    <location>
        <begin position="25"/>
        <end position="126"/>
    </location>
</feature>
<feature type="active site" description="Schiff-base intermediate with substrate; via pyruvic acid" evidence="1">
    <location>
        <position position="25"/>
    </location>
</feature>
<feature type="active site" description="Proton donor" evidence="1">
    <location>
        <position position="58"/>
    </location>
</feature>
<feature type="binding site" evidence="1">
    <location>
        <position position="57"/>
    </location>
    <ligand>
        <name>substrate</name>
    </ligand>
</feature>
<feature type="binding site" evidence="1">
    <location>
        <begin position="73"/>
        <end position="75"/>
    </location>
    <ligand>
        <name>substrate</name>
    </ligand>
</feature>
<feature type="modified residue" description="Pyruvic acid (Ser)" evidence="1">
    <location>
        <position position="25"/>
    </location>
</feature>
<gene>
    <name evidence="1" type="primary">panD</name>
    <name type="ordered locus">SPA0186</name>
</gene>
<name>PAND_SALPA</name>
<sequence length="126" mass="13887">MIRTMLQGKLHRVKVTQADLHYEGSCAIDQDFLDASGILENEAIDIWNVTNGKRFSTYAIAAERGSRIISVNGAAAHCAEVGDIVIIASFVTMSDEEARTWRPKVAYFEGDNEMKRTAKAIPVQVA</sequence>
<accession>Q5PDB9</accession>
<evidence type="ECO:0000255" key="1">
    <source>
        <dbReference type="HAMAP-Rule" id="MF_00446"/>
    </source>
</evidence>
<organism>
    <name type="scientific">Salmonella paratyphi A (strain ATCC 9150 / SARB42)</name>
    <dbReference type="NCBI Taxonomy" id="295319"/>
    <lineage>
        <taxon>Bacteria</taxon>
        <taxon>Pseudomonadati</taxon>
        <taxon>Pseudomonadota</taxon>
        <taxon>Gammaproteobacteria</taxon>
        <taxon>Enterobacterales</taxon>
        <taxon>Enterobacteriaceae</taxon>
        <taxon>Salmonella</taxon>
    </lineage>
</organism>
<protein>
    <recommendedName>
        <fullName evidence="1">Aspartate 1-decarboxylase</fullName>
        <ecNumber evidence="1">4.1.1.11</ecNumber>
    </recommendedName>
    <alternativeName>
        <fullName evidence="1">Aspartate alpha-decarboxylase</fullName>
    </alternativeName>
    <component>
        <recommendedName>
            <fullName evidence="1">Aspartate 1-decarboxylase beta chain</fullName>
        </recommendedName>
    </component>
    <component>
        <recommendedName>
            <fullName evidence="1">Aspartate 1-decarboxylase alpha chain</fullName>
        </recommendedName>
    </component>
</protein>
<comment type="function">
    <text evidence="1">Catalyzes the pyruvoyl-dependent decarboxylation of aspartate to produce beta-alanine.</text>
</comment>
<comment type="catalytic activity">
    <reaction evidence="1">
        <text>L-aspartate + H(+) = beta-alanine + CO2</text>
        <dbReference type="Rhea" id="RHEA:19497"/>
        <dbReference type="ChEBI" id="CHEBI:15378"/>
        <dbReference type="ChEBI" id="CHEBI:16526"/>
        <dbReference type="ChEBI" id="CHEBI:29991"/>
        <dbReference type="ChEBI" id="CHEBI:57966"/>
        <dbReference type="EC" id="4.1.1.11"/>
    </reaction>
</comment>
<comment type="cofactor">
    <cofactor evidence="1">
        <name>pyruvate</name>
        <dbReference type="ChEBI" id="CHEBI:15361"/>
    </cofactor>
    <text evidence="1">Binds 1 pyruvoyl group covalently per subunit.</text>
</comment>
<comment type="pathway">
    <text evidence="1">Cofactor biosynthesis; (R)-pantothenate biosynthesis; beta-alanine from L-aspartate: step 1/1.</text>
</comment>
<comment type="subunit">
    <text evidence="1">Heterooctamer of four alpha and four beta subunits.</text>
</comment>
<comment type="subcellular location">
    <subcellularLocation>
        <location evidence="1">Cytoplasm</location>
    </subcellularLocation>
</comment>
<comment type="PTM">
    <text evidence="1">Is synthesized initially as an inactive proenzyme, which is activated by self-cleavage at a specific serine bond to produce a beta-subunit with a hydroxyl group at its C-terminus and an alpha-subunit with a pyruvoyl group at its N-terminus.</text>
</comment>
<comment type="similarity">
    <text evidence="1">Belongs to the PanD family.</text>
</comment>
<keyword id="KW-0068">Autocatalytic cleavage</keyword>
<keyword id="KW-0963">Cytoplasm</keyword>
<keyword id="KW-0210">Decarboxylase</keyword>
<keyword id="KW-0456">Lyase</keyword>
<keyword id="KW-0566">Pantothenate biosynthesis</keyword>
<keyword id="KW-0670">Pyruvate</keyword>
<keyword id="KW-0704">Schiff base</keyword>
<keyword id="KW-0865">Zymogen</keyword>
<proteinExistence type="inferred from homology"/>
<reference key="1">
    <citation type="journal article" date="2004" name="Nat. Genet.">
        <title>Comparison of genome degradation in Paratyphi A and Typhi, human-restricted serovars of Salmonella enterica that cause typhoid.</title>
        <authorList>
            <person name="McClelland M."/>
            <person name="Sanderson K.E."/>
            <person name="Clifton S.W."/>
            <person name="Latreille P."/>
            <person name="Porwollik S."/>
            <person name="Sabo A."/>
            <person name="Meyer R."/>
            <person name="Bieri T."/>
            <person name="Ozersky P."/>
            <person name="McLellan M."/>
            <person name="Harkins C.R."/>
            <person name="Wang C."/>
            <person name="Nguyen C."/>
            <person name="Berghoff A."/>
            <person name="Elliott G."/>
            <person name="Kohlberg S."/>
            <person name="Strong C."/>
            <person name="Du F."/>
            <person name="Carter J."/>
            <person name="Kremizki C."/>
            <person name="Layman D."/>
            <person name="Leonard S."/>
            <person name="Sun H."/>
            <person name="Fulton L."/>
            <person name="Nash W."/>
            <person name="Miner T."/>
            <person name="Minx P."/>
            <person name="Delehaunty K."/>
            <person name="Fronick C."/>
            <person name="Magrini V."/>
            <person name="Nhan M."/>
            <person name="Warren W."/>
            <person name="Florea L."/>
            <person name="Spieth J."/>
            <person name="Wilson R.K."/>
        </authorList>
    </citation>
    <scope>NUCLEOTIDE SEQUENCE [LARGE SCALE GENOMIC DNA]</scope>
    <source>
        <strain>ATCC 9150 / SARB42</strain>
    </source>
</reference>